<proteinExistence type="inferred from homology"/>
<organism>
    <name type="scientific">Rhodospirillum rubrum (strain ATCC 11170 / ATH 1.1.1 / DSM 467 / LMG 4362 / NCIMB 8255 / S1)</name>
    <dbReference type="NCBI Taxonomy" id="269796"/>
    <lineage>
        <taxon>Bacteria</taxon>
        <taxon>Pseudomonadati</taxon>
        <taxon>Pseudomonadota</taxon>
        <taxon>Alphaproteobacteria</taxon>
        <taxon>Rhodospirillales</taxon>
        <taxon>Rhodospirillaceae</taxon>
        <taxon>Rhodospirillum</taxon>
    </lineage>
</organism>
<comment type="function">
    <text evidence="1">Catalyzes the hydrolysis of the adenine ring of phosphoribosyl-AMP.</text>
</comment>
<comment type="catalytic activity">
    <reaction evidence="1">
        <text>1-(5-phospho-beta-D-ribosyl)-5'-AMP + H2O = 1-(5-phospho-beta-D-ribosyl)-5-[(5-phospho-beta-D-ribosylamino)methylideneamino]imidazole-4-carboxamide</text>
        <dbReference type="Rhea" id="RHEA:20049"/>
        <dbReference type="ChEBI" id="CHEBI:15377"/>
        <dbReference type="ChEBI" id="CHEBI:58435"/>
        <dbReference type="ChEBI" id="CHEBI:59457"/>
        <dbReference type="EC" id="3.5.4.19"/>
    </reaction>
</comment>
<comment type="cofactor">
    <cofactor evidence="1">
        <name>Mg(2+)</name>
        <dbReference type="ChEBI" id="CHEBI:18420"/>
    </cofactor>
    <text evidence="1">Binds 1 Mg(2+) ion per subunit.</text>
</comment>
<comment type="cofactor">
    <cofactor evidence="1">
        <name>Zn(2+)</name>
        <dbReference type="ChEBI" id="CHEBI:29105"/>
    </cofactor>
    <text evidence="1">Binds 1 zinc ion per subunit.</text>
</comment>
<comment type="pathway">
    <text evidence="1">Amino-acid biosynthesis; L-histidine biosynthesis; L-histidine from 5-phospho-alpha-D-ribose 1-diphosphate: step 3/9.</text>
</comment>
<comment type="subunit">
    <text evidence="1">Homodimer.</text>
</comment>
<comment type="subcellular location">
    <subcellularLocation>
        <location evidence="1">Cytoplasm</location>
    </subcellularLocation>
</comment>
<comment type="similarity">
    <text evidence="1">Belongs to the PRA-CH family.</text>
</comment>
<feature type="chain" id="PRO_0000229840" description="Phosphoribosyl-AMP cyclohydrolase">
    <location>
        <begin position="1"/>
        <end position="143"/>
    </location>
</feature>
<feature type="binding site" evidence="1">
    <location>
        <position position="86"/>
    </location>
    <ligand>
        <name>Mg(2+)</name>
        <dbReference type="ChEBI" id="CHEBI:18420"/>
    </ligand>
</feature>
<feature type="binding site" evidence="1">
    <location>
        <position position="87"/>
    </location>
    <ligand>
        <name>Zn(2+)</name>
        <dbReference type="ChEBI" id="CHEBI:29105"/>
        <note>ligand shared between dimeric partners</note>
    </ligand>
</feature>
<feature type="binding site" evidence="1">
    <location>
        <position position="88"/>
    </location>
    <ligand>
        <name>Mg(2+)</name>
        <dbReference type="ChEBI" id="CHEBI:18420"/>
    </ligand>
</feature>
<feature type="binding site" evidence="1">
    <location>
        <position position="90"/>
    </location>
    <ligand>
        <name>Mg(2+)</name>
        <dbReference type="ChEBI" id="CHEBI:18420"/>
    </ligand>
</feature>
<feature type="binding site" evidence="1">
    <location>
        <position position="103"/>
    </location>
    <ligand>
        <name>Zn(2+)</name>
        <dbReference type="ChEBI" id="CHEBI:29105"/>
        <note>ligand shared between dimeric partners</note>
    </ligand>
</feature>
<feature type="binding site" evidence="1">
    <location>
        <position position="110"/>
    </location>
    <ligand>
        <name>Zn(2+)</name>
        <dbReference type="ChEBI" id="CHEBI:29105"/>
        <note>ligand shared between dimeric partners</note>
    </ligand>
</feature>
<keyword id="KW-0028">Amino-acid biosynthesis</keyword>
<keyword id="KW-0963">Cytoplasm</keyword>
<keyword id="KW-0368">Histidine biosynthesis</keyword>
<keyword id="KW-0378">Hydrolase</keyword>
<keyword id="KW-0460">Magnesium</keyword>
<keyword id="KW-0479">Metal-binding</keyword>
<keyword id="KW-1185">Reference proteome</keyword>
<keyword id="KW-0862">Zinc</keyword>
<gene>
    <name evidence="1" type="primary">hisI</name>
    <name type="ordered locus">Rru_A1612</name>
</gene>
<accession>Q2RTY3</accession>
<name>HIS3_RHORT</name>
<protein>
    <recommendedName>
        <fullName evidence="1">Phosphoribosyl-AMP cyclohydrolase</fullName>
        <shortName evidence="1">PRA-CH</shortName>
        <ecNumber evidence="1">3.5.4.19</ecNumber>
    </recommendedName>
</protein>
<evidence type="ECO:0000255" key="1">
    <source>
        <dbReference type="HAMAP-Rule" id="MF_01021"/>
    </source>
</evidence>
<sequence>MKNTSALAETAALWAAVRFTADGLVPVIAQQHDSGEVLMMAWMNREALEETLVTGKACYWSRSRGRLWRKGESSGQTQKVLALRLDCDGDTILLLVDQTGVACHTGRRSCFFNEVGPTGEITVVSAPLVTPEALYGAEGHSHP</sequence>
<dbReference type="EC" id="3.5.4.19" evidence="1"/>
<dbReference type="EMBL" id="CP000230">
    <property type="protein sequence ID" value="ABC22412.1"/>
    <property type="molecule type" value="Genomic_DNA"/>
</dbReference>
<dbReference type="RefSeq" id="WP_011389302.1">
    <property type="nucleotide sequence ID" value="NC_007643.1"/>
</dbReference>
<dbReference type="RefSeq" id="YP_426699.1">
    <property type="nucleotide sequence ID" value="NC_007643.1"/>
</dbReference>
<dbReference type="SMR" id="Q2RTY3"/>
<dbReference type="STRING" id="269796.Rru_A1612"/>
<dbReference type="EnsemblBacteria" id="ABC22412">
    <property type="protein sequence ID" value="ABC22412"/>
    <property type="gene ID" value="Rru_A1612"/>
</dbReference>
<dbReference type="KEGG" id="rru:Rru_A1612"/>
<dbReference type="PATRIC" id="fig|269796.9.peg.1689"/>
<dbReference type="eggNOG" id="COG0139">
    <property type="taxonomic scope" value="Bacteria"/>
</dbReference>
<dbReference type="HOGENOM" id="CLU_048577_5_0_5"/>
<dbReference type="PhylomeDB" id="Q2RTY3"/>
<dbReference type="UniPathway" id="UPA00031">
    <property type="reaction ID" value="UER00008"/>
</dbReference>
<dbReference type="Proteomes" id="UP000001929">
    <property type="component" value="Chromosome"/>
</dbReference>
<dbReference type="GO" id="GO:0005737">
    <property type="term" value="C:cytoplasm"/>
    <property type="evidence" value="ECO:0007669"/>
    <property type="project" value="UniProtKB-SubCell"/>
</dbReference>
<dbReference type="GO" id="GO:0000287">
    <property type="term" value="F:magnesium ion binding"/>
    <property type="evidence" value="ECO:0007669"/>
    <property type="project" value="UniProtKB-UniRule"/>
</dbReference>
<dbReference type="GO" id="GO:0004635">
    <property type="term" value="F:phosphoribosyl-AMP cyclohydrolase activity"/>
    <property type="evidence" value="ECO:0007669"/>
    <property type="project" value="UniProtKB-UniRule"/>
</dbReference>
<dbReference type="GO" id="GO:0008270">
    <property type="term" value="F:zinc ion binding"/>
    <property type="evidence" value="ECO:0007669"/>
    <property type="project" value="UniProtKB-UniRule"/>
</dbReference>
<dbReference type="GO" id="GO:0000105">
    <property type="term" value="P:L-histidine biosynthetic process"/>
    <property type="evidence" value="ECO:0007669"/>
    <property type="project" value="UniProtKB-UniRule"/>
</dbReference>
<dbReference type="FunFam" id="3.10.20.810:FF:000001">
    <property type="entry name" value="Histidine biosynthesis bifunctional protein HisIE"/>
    <property type="match status" value="1"/>
</dbReference>
<dbReference type="Gene3D" id="3.10.20.810">
    <property type="entry name" value="Phosphoribosyl-AMP cyclohydrolase"/>
    <property type="match status" value="1"/>
</dbReference>
<dbReference type="HAMAP" id="MF_01021">
    <property type="entry name" value="HisI"/>
    <property type="match status" value="1"/>
</dbReference>
<dbReference type="InterPro" id="IPR026660">
    <property type="entry name" value="PRA-CH"/>
</dbReference>
<dbReference type="InterPro" id="IPR002496">
    <property type="entry name" value="PRib_AMP_CycHydrolase_dom"/>
</dbReference>
<dbReference type="InterPro" id="IPR038019">
    <property type="entry name" value="PRib_AMP_CycHydrolase_sf"/>
</dbReference>
<dbReference type="NCBIfam" id="NF000768">
    <property type="entry name" value="PRK00051.1"/>
    <property type="match status" value="1"/>
</dbReference>
<dbReference type="PANTHER" id="PTHR42945">
    <property type="entry name" value="HISTIDINE BIOSYNTHESIS BIFUNCTIONAL PROTEIN"/>
    <property type="match status" value="1"/>
</dbReference>
<dbReference type="PANTHER" id="PTHR42945:SF1">
    <property type="entry name" value="HISTIDINE BIOSYNTHESIS BIFUNCTIONAL PROTEIN HIS7"/>
    <property type="match status" value="1"/>
</dbReference>
<dbReference type="Pfam" id="PF01502">
    <property type="entry name" value="PRA-CH"/>
    <property type="match status" value="1"/>
</dbReference>
<dbReference type="SUPFAM" id="SSF141734">
    <property type="entry name" value="HisI-like"/>
    <property type="match status" value="1"/>
</dbReference>
<reference key="1">
    <citation type="journal article" date="2011" name="Stand. Genomic Sci.">
        <title>Complete genome sequence of Rhodospirillum rubrum type strain (S1).</title>
        <authorList>
            <person name="Munk A.C."/>
            <person name="Copeland A."/>
            <person name="Lucas S."/>
            <person name="Lapidus A."/>
            <person name="Del Rio T.G."/>
            <person name="Barry K."/>
            <person name="Detter J.C."/>
            <person name="Hammon N."/>
            <person name="Israni S."/>
            <person name="Pitluck S."/>
            <person name="Brettin T."/>
            <person name="Bruce D."/>
            <person name="Han C."/>
            <person name="Tapia R."/>
            <person name="Gilna P."/>
            <person name="Schmutz J."/>
            <person name="Larimer F."/>
            <person name="Land M."/>
            <person name="Kyrpides N.C."/>
            <person name="Mavromatis K."/>
            <person name="Richardson P."/>
            <person name="Rohde M."/>
            <person name="Goeker M."/>
            <person name="Klenk H.P."/>
            <person name="Zhang Y."/>
            <person name="Roberts G.P."/>
            <person name="Reslewic S."/>
            <person name="Schwartz D.C."/>
        </authorList>
    </citation>
    <scope>NUCLEOTIDE SEQUENCE [LARGE SCALE GENOMIC DNA]</scope>
    <source>
        <strain>ATCC 11170 / ATH 1.1.1 / DSM 467 / LMG 4362 / NCIMB 8255 / S1</strain>
    </source>
</reference>